<name>METN3_PSEF5</name>
<protein>
    <recommendedName>
        <fullName evidence="1">Methionine import ATP-binding protein MetN 3</fullName>
        <ecNumber evidence="1">7.4.2.11</ecNumber>
    </recommendedName>
</protein>
<reference key="1">
    <citation type="journal article" date="2005" name="Nat. Biotechnol.">
        <title>Complete genome sequence of the plant commensal Pseudomonas fluorescens Pf-5.</title>
        <authorList>
            <person name="Paulsen I.T."/>
            <person name="Press C.M."/>
            <person name="Ravel J."/>
            <person name="Kobayashi D.Y."/>
            <person name="Myers G.S.A."/>
            <person name="Mavrodi D.V."/>
            <person name="DeBoy R.T."/>
            <person name="Seshadri R."/>
            <person name="Ren Q."/>
            <person name="Madupu R."/>
            <person name="Dodson R.J."/>
            <person name="Durkin A.S."/>
            <person name="Brinkac L.M."/>
            <person name="Daugherty S.C."/>
            <person name="Sullivan S.A."/>
            <person name="Rosovitz M.J."/>
            <person name="Gwinn M.L."/>
            <person name="Zhou L."/>
            <person name="Schneider D.J."/>
            <person name="Cartinhour S.W."/>
            <person name="Nelson W.C."/>
            <person name="Weidman J."/>
            <person name="Watkins K."/>
            <person name="Tran K."/>
            <person name="Khouri H."/>
            <person name="Pierson E.A."/>
            <person name="Pierson L.S. III"/>
            <person name="Thomashow L.S."/>
            <person name="Loper J.E."/>
        </authorList>
    </citation>
    <scope>NUCLEOTIDE SEQUENCE [LARGE SCALE GENOMIC DNA]</scope>
    <source>
        <strain>ATCC BAA-477 / NRRL B-23932 / Pf-5</strain>
    </source>
</reference>
<gene>
    <name evidence="1" type="primary">metN3</name>
    <name type="ordered locus">PFL_3188</name>
</gene>
<feature type="chain" id="PRO_0000270349" description="Methionine import ATP-binding protein MetN 3">
    <location>
        <begin position="1"/>
        <end position="325"/>
    </location>
</feature>
<feature type="domain" description="ABC transporter" evidence="1">
    <location>
        <begin position="2"/>
        <end position="239"/>
    </location>
</feature>
<feature type="binding site" evidence="1">
    <location>
        <begin position="36"/>
        <end position="43"/>
    </location>
    <ligand>
        <name>ATP</name>
        <dbReference type="ChEBI" id="CHEBI:30616"/>
    </ligand>
</feature>
<organism>
    <name type="scientific">Pseudomonas fluorescens (strain ATCC BAA-477 / NRRL B-23932 / Pf-5)</name>
    <dbReference type="NCBI Taxonomy" id="220664"/>
    <lineage>
        <taxon>Bacteria</taxon>
        <taxon>Pseudomonadati</taxon>
        <taxon>Pseudomonadota</taxon>
        <taxon>Gammaproteobacteria</taxon>
        <taxon>Pseudomonadales</taxon>
        <taxon>Pseudomonadaceae</taxon>
        <taxon>Pseudomonas</taxon>
    </lineage>
</organism>
<proteinExistence type="inferred from homology"/>
<evidence type="ECO:0000255" key="1">
    <source>
        <dbReference type="HAMAP-Rule" id="MF_01719"/>
    </source>
</evidence>
<sequence length="325" mass="34603">MIEVQQLCKVYGEGQPAALDRVSLTVPDRAVYGILGRSGAGKSTLLRCLNLLERPSSGRILMDGQDLGALSASELRRQRQGIGMIFQGFNLLHSRTVEDNVAVPLEIAGLGKSQRRARVLELLELVGLGDKAQAYPSQLSGGQKQRVGIARALAAGPRYLLSDEATSALDPETTASILQLLAQINRELGLTIVLITHELEVVKAICSHAASLAGGRLMESGAVAELLGNPQSALGRALLPGYNLPFNGSQPQAELTFFDNQRAAPLLEQLSRQQALELKVLAGGVEAVGGRRVGRLRIAAAPADAGKFQQLLTALAQRGIRSERL</sequence>
<dbReference type="EC" id="7.4.2.11" evidence="1"/>
<dbReference type="EMBL" id="CP000076">
    <property type="protein sequence ID" value="AAY92457.1"/>
    <property type="molecule type" value="Genomic_DNA"/>
</dbReference>
<dbReference type="RefSeq" id="WP_011061473.1">
    <property type="nucleotide sequence ID" value="NC_004129.6"/>
</dbReference>
<dbReference type="SMR" id="Q4KBU0"/>
<dbReference type="STRING" id="220664.PFL_3188"/>
<dbReference type="KEGG" id="pfl:PFL_3188"/>
<dbReference type="PATRIC" id="fig|220664.5.peg.3253"/>
<dbReference type="eggNOG" id="COG1135">
    <property type="taxonomic scope" value="Bacteria"/>
</dbReference>
<dbReference type="HOGENOM" id="CLU_000604_1_3_6"/>
<dbReference type="Proteomes" id="UP000008540">
    <property type="component" value="Chromosome"/>
</dbReference>
<dbReference type="GO" id="GO:0005886">
    <property type="term" value="C:plasma membrane"/>
    <property type="evidence" value="ECO:0007669"/>
    <property type="project" value="UniProtKB-SubCell"/>
</dbReference>
<dbReference type="GO" id="GO:0033232">
    <property type="term" value="F:ABC-type D-methionine transporter activity"/>
    <property type="evidence" value="ECO:0007669"/>
    <property type="project" value="UniProtKB-EC"/>
</dbReference>
<dbReference type="GO" id="GO:0005524">
    <property type="term" value="F:ATP binding"/>
    <property type="evidence" value="ECO:0007669"/>
    <property type="project" value="UniProtKB-KW"/>
</dbReference>
<dbReference type="GO" id="GO:0016887">
    <property type="term" value="F:ATP hydrolysis activity"/>
    <property type="evidence" value="ECO:0007669"/>
    <property type="project" value="InterPro"/>
</dbReference>
<dbReference type="FunFam" id="3.40.50.300:FF:000056">
    <property type="entry name" value="Cell division ATP-binding protein FtsE"/>
    <property type="match status" value="1"/>
</dbReference>
<dbReference type="Gene3D" id="3.30.70.260">
    <property type="match status" value="1"/>
</dbReference>
<dbReference type="Gene3D" id="3.40.50.300">
    <property type="entry name" value="P-loop containing nucleotide triphosphate hydrolases"/>
    <property type="match status" value="1"/>
</dbReference>
<dbReference type="InterPro" id="IPR003593">
    <property type="entry name" value="AAA+_ATPase"/>
</dbReference>
<dbReference type="InterPro" id="IPR003439">
    <property type="entry name" value="ABC_transporter-like_ATP-bd"/>
</dbReference>
<dbReference type="InterPro" id="IPR017871">
    <property type="entry name" value="ABC_transporter-like_CS"/>
</dbReference>
<dbReference type="InterPro" id="IPR045865">
    <property type="entry name" value="ACT-like_dom_sf"/>
</dbReference>
<dbReference type="InterPro" id="IPR050086">
    <property type="entry name" value="MetN_ABC_transporter-like"/>
</dbReference>
<dbReference type="InterPro" id="IPR018449">
    <property type="entry name" value="NIL_domain"/>
</dbReference>
<dbReference type="InterPro" id="IPR027417">
    <property type="entry name" value="P-loop_NTPase"/>
</dbReference>
<dbReference type="PANTHER" id="PTHR43166">
    <property type="entry name" value="AMINO ACID IMPORT ATP-BINDING PROTEIN"/>
    <property type="match status" value="1"/>
</dbReference>
<dbReference type="PANTHER" id="PTHR43166:SF30">
    <property type="entry name" value="METHIONINE IMPORT ATP-BINDING PROTEIN METN"/>
    <property type="match status" value="1"/>
</dbReference>
<dbReference type="Pfam" id="PF00005">
    <property type="entry name" value="ABC_tran"/>
    <property type="match status" value="1"/>
</dbReference>
<dbReference type="Pfam" id="PF09383">
    <property type="entry name" value="NIL"/>
    <property type="match status" value="1"/>
</dbReference>
<dbReference type="SMART" id="SM00382">
    <property type="entry name" value="AAA"/>
    <property type="match status" value="1"/>
</dbReference>
<dbReference type="SMART" id="SM00930">
    <property type="entry name" value="NIL"/>
    <property type="match status" value="1"/>
</dbReference>
<dbReference type="SUPFAM" id="SSF55021">
    <property type="entry name" value="ACT-like"/>
    <property type="match status" value="1"/>
</dbReference>
<dbReference type="SUPFAM" id="SSF52540">
    <property type="entry name" value="P-loop containing nucleoside triphosphate hydrolases"/>
    <property type="match status" value="1"/>
</dbReference>
<dbReference type="PROSITE" id="PS00211">
    <property type="entry name" value="ABC_TRANSPORTER_1"/>
    <property type="match status" value="1"/>
</dbReference>
<dbReference type="PROSITE" id="PS50893">
    <property type="entry name" value="ABC_TRANSPORTER_2"/>
    <property type="match status" value="1"/>
</dbReference>
<dbReference type="PROSITE" id="PS51264">
    <property type="entry name" value="METN"/>
    <property type="match status" value="1"/>
</dbReference>
<accession>Q4KBU0</accession>
<keyword id="KW-0029">Amino-acid transport</keyword>
<keyword id="KW-0067">ATP-binding</keyword>
<keyword id="KW-0997">Cell inner membrane</keyword>
<keyword id="KW-1003">Cell membrane</keyword>
<keyword id="KW-0472">Membrane</keyword>
<keyword id="KW-0547">Nucleotide-binding</keyword>
<keyword id="KW-1278">Translocase</keyword>
<keyword id="KW-0813">Transport</keyword>
<comment type="function">
    <text evidence="1">Part of the ABC transporter complex MetNIQ involved in methionine import. Responsible for energy coupling to the transport system.</text>
</comment>
<comment type="catalytic activity">
    <reaction evidence="1">
        <text>L-methionine(out) + ATP + H2O = L-methionine(in) + ADP + phosphate + H(+)</text>
        <dbReference type="Rhea" id="RHEA:29779"/>
        <dbReference type="ChEBI" id="CHEBI:15377"/>
        <dbReference type="ChEBI" id="CHEBI:15378"/>
        <dbReference type="ChEBI" id="CHEBI:30616"/>
        <dbReference type="ChEBI" id="CHEBI:43474"/>
        <dbReference type="ChEBI" id="CHEBI:57844"/>
        <dbReference type="ChEBI" id="CHEBI:456216"/>
        <dbReference type="EC" id="7.4.2.11"/>
    </reaction>
</comment>
<comment type="catalytic activity">
    <reaction evidence="1">
        <text>D-methionine(out) + ATP + H2O = D-methionine(in) + ADP + phosphate + H(+)</text>
        <dbReference type="Rhea" id="RHEA:29767"/>
        <dbReference type="ChEBI" id="CHEBI:15377"/>
        <dbReference type="ChEBI" id="CHEBI:15378"/>
        <dbReference type="ChEBI" id="CHEBI:30616"/>
        <dbReference type="ChEBI" id="CHEBI:43474"/>
        <dbReference type="ChEBI" id="CHEBI:57932"/>
        <dbReference type="ChEBI" id="CHEBI:456216"/>
        <dbReference type="EC" id="7.4.2.11"/>
    </reaction>
</comment>
<comment type="subunit">
    <text evidence="1">The complex is composed of two ATP-binding proteins (MetN), two transmembrane proteins (MetI) and a solute-binding protein (MetQ).</text>
</comment>
<comment type="subcellular location">
    <subcellularLocation>
        <location evidence="1">Cell inner membrane</location>
        <topology evidence="1">Peripheral membrane protein</topology>
    </subcellularLocation>
</comment>
<comment type="similarity">
    <text evidence="1">Belongs to the ABC transporter superfamily. Methionine importer (TC 3.A.1.24) family.</text>
</comment>